<sequence>MAAATASSQLIFSKPYSPSRLCPFQLCVFDAKSVLSSSRRKHVNGSGVRCMAVKEATSETKKRSGYEIITLTSWLLQQEQKGIIDAELTIVLSSISMACKQIASLVQRANISNLTGTQGAVNIQGEDQKKLDVISNEVFSNCLRSSGRTGIIASEEEDVAVAVEESYSGNYIVVFDPLDGSSNLDAAVSTGSIFGIYSPNDECLPDFGDDSDDNTLGTEEQRCIVNVCQPGSNLLAAGYCMYSSSVAFVLTIGKGVFVFTLDPLYGEFVLTQENLQIPKSGEIYSFNEGNYKLWDENLKKYIDDLKEPGPSGKPYSARYIGSLVGDFHRTLLYGGIYGYPRDKKSKNGKLRLLYECAPMSFIVEQAGGKGSDGHQRVLDIQPTEIHQRVPLYIGSTEEVEKVEKYLA</sequence>
<protein>
    <recommendedName>
        <fullName>Fructose-1,6-bisphosphatase, chloroplastic</fullName>
        <shortName>FBPase</shortName>
        <ecNumber>3.1.3.11</ecNumber>
    </recommendedName>
    <alternativeName>
        <fullName>D-fructose-1,6-bisphosphate 1-phosphohydrolase</fullName>
    </alternativeName>
</protein>
<organism>
    <name type="scientific">Pisum sativum</name>
    <name type="common">Garden pea</name>
    <name type="synonym">Lathyrus oleraceus</name>
    <dbReference type="NCBI Taxonomy" id="3888"/>
    <lineage>
        <taxon>Eukaryota</taxon>
        <taxon>Viridiplantae</taxon>
        <taxon>Streptophyta</taxon>
        <taxon>Embryophyta</taxon>
        <taxon>Tracheophyta</taxon>
        <taxon>Spermatophyta</taxon>
        <taxon>Magnoliopsida</taxon>
        <taxon>eudicotyledons</taxon>
        <taxon>Gunneridae</taxon>
        <taxon>Pentapetalae</taxon>
        <taxon>rosids</taxon>
        <taxon>fabids</taxon>
        <taxon>Fabales</taxon>
        <taxon>Fabaceae</taxon>
        <taxon>Papilionoideae</taxon>
        <taxon>50 kb inversion clade</taxon>
        <taxon>NPAAA clade</taxon>
        <taxon>Hologalegina</taxon>
        <taxon>IRL clade</taxon>
        <taxon>Fabeae</taxon>
        <taxon>Pisum</taxon>
    </lineage>
</organism>
<proteinExistence type="evidence at protein level"/>
<gene>
    <name type="primary">FBP</name>
</gene>
<evidence type="ECO:0000250" key="1"/>
<evidence type="ECO:0000305" key="2"/>
<evidence type="ECO:0007829" key="3">
    <source>
        <dbReference type="PDB" id="1D9Q"/>
    </source>
</evidence>
<evidence type="ECO:0007829" key="4">
    <source>
        <dbReference type="PDB" id="1DCU"/>
    </source>
</evidence>
<comment type="catalytic activity">
    <reaction>
        <text>beta-D-fructose 1,6-bisphosphate + H2O = beta-D-fructose 6-phosphate + phosphate</text>
        <dbReference type="Rhea" id="RHEA:11064"/>
        <dbReference type="ChEBI" id="CHEBI:15377"/>
        <dbReference type="ChEBI" id="CHEBI:32966"/>
        <dbReference type="ChEBI" id="CHEBI:43474"/>
        <dbReference type="ChEBI" id="CHEBI:57634"/>
        <dbReference type="EC" id="3.1.3.11"/>
    </reaction>
</comment>
<comment type="cofactor">
    <cofactor evidence="1">
        <name>Mg(2+)</name>
        <dbReference type="ChEBI" id="CHEBI:18420"/>
    </cofactor>
    <text evidence="1">Binds 3 Mg(2+) ions per subunit.</text>
</comment>
<comment type="pathway">
    <text>Carbohydrate biosynthesis; Calvin cycle.</text>
</comment>
<comment type="subunit">
    <text>Homotetramer.</text>
</comment>
<comment type="subcellular location">
    <subcellularLocation>
        <location>Plastid</location>
        <location>Chloroplast stroma</location>
    </subcellularLocation>
</comment>
<comment type="induction">
    <text evidence="1">Light activation through pH changes, Mg(2+) levels and also by light-modulated reduction of essential disulfide groups via the ferredoxin-thioredoxin f system.</text>
</comment>
<comment type="miscellaneous">
    <text>In plants there are two FBPase isozymes: one in the cytosol and the other in the chloroplast.</text>
</comment>
<comment type="similarity">
    <text evidence="2">Belongs to the FBPase class 1 family.</text>
</comment>
<keyword id="KW-0002">3D-structure</keyword>
<keyword id="KW-0113">Calvin cycle</keyword>
<keyword id="KW-0119">Carbohydrate metabolism</keyword>
<keyword id="KW-0150">Chloroplast</keyword>
<keyword id="KW-1015">Disulfide bond</keyword>
<keyword id="KW-0378">Hydrolase</keyword>
<keyword id="KW-0460">Magnesium</keyword>
<keyword id="KW-0479">Metal-binding</keyword>
<keyword id="KW-0934">Plastid</keyword>
<keyword id="KW-0809">Transit peptide</keyword>
<dbReference type="EC" id="3.1.3.11"/>
<dbReference type="EMBL" id="L34806">
    <property type="protein sequence ID" value="AAD10213.1"/>
    <property type="molecule type" value="mRNA"/>
</dbReference>
<dbReference type="EMBL" id="X68826">
    <property type="protein sequence ID" value="CAA48719.1"/>
    <property type="molecule type" value="mRNA"/>
</dbReference>
<dbReference type="PIR" id="S29560">
    <property type="entry name" value="S29560"/>
</dbReference>
<dbReference type="PIR" id="T06408">
    <property type="entry name" value="T06408"/>
</dbReference>
<dbReference type="PDB" id="1D9Q">
    <property type="method" value="X-ray"/>
    <property type="resolution" value="2.40 A"/>
    <property type="chains" value="A/B/C/D=51-407"/>
</dbReference>
<dbReference type="PDB" id="1DBZ">
    <property type="method" value="X-ray"/>
    <property type="resolution" value="2.65 A"/>
    <property type="chains" value="A/B/C/D=51-407"/>
</dbReference>
<dbReference type="PDB" id="1DCU">
    <property type="method" value="X-ray"/>
    <property type="resolution" value="2.20 A"/>
    <property type="chains" value="A/B/C/D=51-407"/>
</dbReference>
<dbReference type="PDBsum" id="1D9Q"/>
<dbReference type="PDBsum" id="1DBZ"/>
<dbReference type="PDBsum" id="1DCU"/>
<dbReference type="SMR" id="P46275"/>
<dbReference type="BRENDA" id="3.1.3.11">
    <property type="organism ID" value="4872"/>
</dbReference>
<dbReference type="SABIO-RK" id="P46275"/>
<dbReference type="UniPathway" id="UPA00116"/>
<dbReference type="EvolutionaryTrace" id="P46275"/>
<dbReference type="GO" id="GO:0009570">
    <property type="term" value="C:chloroplast stroma"/>
    <property type="evidence" value="ECO:0007669"/>
    <property type="project" value="UniProtKB-SubCell"/>
</dbReference>
<dbReference type="GO" id="GO:0005829">
    <property type="term" value="C:cytosol"/>
    <property type="evidence" value="ECO:0007669"/>
    <property type="project" value="TreeGrafter"/>
</dbReference>
<dbReference type="GO" id="GO:0042132">
    <property type="term" value="F:fructose 1,6-bisphosphate 1-phosphatase activity"/>
    <property type="evidence" value="ECO:0007669"/>
    <property type="project" value="UniProtKB-EC"/>
</dbReference>
<dbReference type="GO" id="GO:0046872">
    <property type="term" value="F:metal ion binding"/>
    <property type="evidence" value="ECO:0007669"/>
    <property type="project" value="UniProtKB-KW"/>
</dbReference>
<dbReference type="GO" id="GO:0030388">
    <property type="term" value="P:fructose 1,6-bisphosphate metabolic process"/>
    <property type="evidence" value="ECO:0007669"/>
    <property type="project" value="TreeGrafter"/>
</dbReference>
<dbReference type="GO" id="GO:0006002">
    <property type="term" value="P:fructose 6-phosphate metabolic process"/>
    <property type="evidence" value="ECO:0007669"/>
    <property type="project" value="TreeGrafter"/>
</dbReference>
<dbReference type="GO" id="GO:0006000">
    <property type="term" value="P:fructose metabolic process"/>
    <property type="evidence" value="ECO:0007669"/>
    <property type="project" value="TreeGrafter"/>
</dbReference>
<dbReference type="GO" id="GO:0006094">
    <property type="term" value="P:gluconeogenesis"/>
    <property type="evidence" value="ECO:0007669"/>
    <property type="project" value="TreeGrafter"/>
</dbReference>
<dbReference type="GO" id="GO:0019253">
    <property type="term" value="P:reductive pentose-phosphate cycle"/>
    <property type="evidence" value="ECO:0007669"/>
    <property type="project" value="UniProtKB-UniPathway"/>
</dbReference>
<dbReference type="GO" id="GO:0005986">
    <property type="term" value="P:sucrose biosynthetic process"/>
    <property type="evidence" value="ECO:0007669"/>
    <property type="project" value="TreeGrafter"/>
</dbReference>
<dbReference type="CDD" id="cd00354">
    <property type="entry name" value="FBPase"/>
    <property type="match status" value="1"/>
</dbReference>
<dbReference type="FunFam" id="3.40.190.80:FF:000001">
    <property type="entry name" value="Fructose-1,6-bisphosphatase class 1"/>
    <property type="match status" value="1"/>
</dbReference>
<dbReference type="FunFam" id="3.30.540.10:FF:000014">
    <property type="entry name" value="Fructose-1,6-bisphosphatase, chloroplastic"/>
    <property type="match status" value="1"/>
</dbReference>
<dbReference type="Gene3D" id="3.40.190.80">
    <property type="match status" value="1"/>
</dbReference>
<dbReference type="Gene3D" id="3.30.540.10">
    <property type="entry name" value="Fructose-1,6-Bisphosphatase, subunit A, domain 1"/>
    <property type="match status" value="1"/>
</dbReference>
<dbReference type="HAMAP" id="MF_01855">
    <property type="entry name" value="FBPase_class1"/>
    <property type="match status" value="1"/>
</dbReference>
<dbReference type="InterPro" id="IPR044015">
    <property type="entry name" value="FBPase_C_dom"/>
</dbReference>
<dbReference type="InterPro" id="IPR000146">
    <property type="entry name" value="FBPase_class-1"/>
</dbReference>
<dbReference type="InterPro" id="IPR033391">
    <property type="entry name" value="FBPase_N"/>
</dbReference>
<dbReference type="InterPro" id="IPR028343">
    <property type="entry name" value="FBPtase"/>
</dbReference>
<dbReference type="InterPro" id="IPR020548">
    <property type="entry name" value="Fructose_bisphosphatase_AS"/>
</dbReference>
<dbReference type="NCBIfam" id="NF006778">
    <property type="entry name" value="PRK09293.1-1"/>
    <property type="match status" value="1"/>
</dbReference>
<dbReference type="PANTHER" id="PTHR11556">
    <property type="entry name" value="FRUCTOSE-1,6-BISPHOSPHATASE-RELATED"/>
    <property type="match status" value="1"/>
</dbReference>
<dbReference type="PANTHER" id="PTHR11556:SF1">
    <property type="entry name" value="FRUCTOSE-BISPHOSPHATASE"/>
    <property type="match status" value="1"/>
</dbReference>
<dbReference type="Pfam" id="PF00316">
    <property type="entry name" value="FBPase"/>
    <property type="match status" value="1"/>
</dbReference>
<dbReference type="Pfam" id="PF18913">
    <property type="entry name" value="FBPase_C"/>
    <property type="match status" value="1"/>
</dbReference>
<dbReference type="PIRSF" id="PIRSF500210">
    <property type="entry name" value="FBPtase"/>
    <property type="match status" value="1"/>
</dbReference>
<dbReference type="PIRSF" id="PIRSF000904">
    <property type="entry name" value="FBPtase_SBPase"/>
    <property type="match status" value="1"/>
</dbReference>
<dbReference type="PRINTS" id="PR00115">
    <property type="entry name" value="F16BPHPHTASE"/>
</dbReference>
<dbReference type="SUPFAM" id="SSF56655">
    <property type="entry name" value="Carbohydrate phosphatase"/>
    <property type="match status" value="1"/>
</dbReference>
<dbReference type="PROSITE" id="PS00124">
    <property type="entry name" value="FBPASE"/>
    <property type="match status" value="1"/>
</dbReference>
<accession>P46275</accession>
<accession>Q37263</accession>
<reference key="1">
    <citation type="journal article" date="1995" name="Plant Physiol.">
        <title>Nucleotide sequence analysis of a cDNA encoding chloroplastic fructose-1,6-bisphosphatase from pea (Pisum sativum l.).</title>
        <authorList>
            <person name="Dong S.M."/>
            <person name="Rhim J.H."/>
            <person name="Hahn T.R."/>
        </authorList>
    </citation>
    <scope>NUCLEOTIDE SEQUENCE [MRNA]</scope>
    <source>
        <strain>cv. Giant</strain>
        <tissue>Leaf</tissue>
    </source>
</reference>
<reference key="2">
    <citation type="journal article" date="1994" name="Planta">
        <title>Cloning, structure and expression of a pea cDNA clone coding for a photosynthetic fructose-1,6-bisphosphatase with some features different from those of the leaf chloroplast enzyme.</title>
        <authorList>
            <person name="Carrasco J.L."/>
            <person name="Chueca A."/>
            <person name="Prado F.E."/>
            <person name="Hermoso R."/>
            <person name="Lazaro J.J."/>
            <person name="Ramos J.L."/>
            <person name="Sahrawy M."/>
            <person name="Lopez Gorge J."/>
        </authorList>
    </citation>
    <scope>NUCLEOTIDE SEQUENCE [MRNA] OF 27-407</scope>
    <source>
        <strain>cv. Lincoln</strain>
        <tissue>Leaf</tissue>
    </source>
</reference>
<reference key="3">
    <citation type="journal article" date="1999" name="EMBO J.">
        <title>Redox signalling in the chloroplast: structure of oxidized pea fructose-1,6-bisphosphate phosphatase.</title>
        <authorList>
            <person name="Chiadmi M."/>
            <person name="Navaza A."/>
            <person name="Miginiac-Maslow M."/>
            <person name="Jacquot J.-P."/>
            <person name="Cherfils J."/>
        </authorList>
    </citation>
    <scope>X-RAY CRYSTALLOGRAPHY (2.4 ANGSTROMS) OF 51-407</scope>
</reference>
<feature type="transit peptide" description="Chloroplast">
    <location>
        <begin position="1"/>
        <end position="50"/>
    </location>
</feature>
<feature type="chain" id="PRO_0000008817" description="Fructose-1,6-bisphosphatase, chloroplastic">
    <location>
        <begin position="51"/>
        <end position="407"/>
    </location>
</feature>
<feature type="binding site" evidence="1">
    <location>
        <position position="126"/>
    </location>
    <ligand>
        <name>Mg(2+)</name>
        <dbReference type="ChEBI" id="CHEBI:18420"/>
        <label>1</label>
    </ligand>
</feature>
<feature type="binding site" evidence="1">
    <location>
        <position position="155"/>
    </location>
    <ligand>
        <name>Mg(2+)</name>
        <dbReference type="ChEBI" id="CHEBI:18420"/>
        <label>1</label>
    </ligand>
</feature>
<feature type="binding site" evidence="1">
    <location>
        <position position="155"/>
    </location>
    <ligand>
        <name>Mg(2+)</name>
        <dbReference type="ChEBI" id="CHEBI:18420"/>
        <label>2</label>
    </ligand>
</feature>
<feature type="binding site" evidence="1">
    <location>
        <position position="176"/>
    </location>
    <ligand>
        <name>Mg(2+)</name>
        <dbReference type="ChEBI" id="CHEBI:18420"/>
        <label>2</label>
    </ligand>
</feature>
<feature type="binding site" evidence="1">
    <location>
        <position position="176"/>
    </location>
    <ligand>
        <name>Mg(2+)</name>
        <dbReference type="ChEBI" id="CHEBI:18420"/>
        <label>3</label>
    </ligand>
</feature>
<feature type="binding site" evidence="1">
    <location>
        <position position="178"/>
    </location>
    <ligand>
        <name>Mg(2+)</name>
        <dbReference type="ChEBI" id="CHEBI:18420"/>
        <label>2</label>
    </ligand>
</feature>
<feature type="binding site" evidence="1">
    <location>
        <begin position="179"/>
        <end position="182"/>
    </location>
    <ligand>
        <name>substrate</name>
    </ligand>
</feature>
<feature type="binding site" evidence="1">
    <location>
        <position position="179"/>
    </location>
    <ligand>
        <name>Mg(2+)</name>
        <dbReference type="ChEBI" id="CHEBI:18420"/>
        <label>3</label>
    </ligand>
</feature>
<feature type="binding site" evidence="1">
    <location>
        <position position="287"/>
    </location>
    <ligand>
        <name>substrate</name>
    </ligand>
</feature>
<feature type="binding site" evidence="1">
    <location>
        <position position="319"/>
    </location>
    <ligand>
        <name>substrate</name>
    </ligand>
</feature>
<feature type="binding site" evidence="1">
    <location>
        <position position="337"/>
    </location>
    <ligand>
        <name>substrate</name>
    </ligand>
</feature>
<feature type="binding site" evidence="1">
    <location>
        <position position="339"/>
    </location>
    <ligand>
        <name>substrate</name>
    </ligand>
</feature>
<feature type="binding site" evidence="1">
    <location>
        <position position="349"/>
    </location>
    <ligand>
        <name>substrate</name>
    </ligand>
</feature>
<feature type="binding site" evidence="1">
    <location>
        <position position="355"/>
    </location>
    <ligand>
        <name>Mg(2+)</name>
        <dbReference type="ChEBI" id="CHEBI:18420"/>
        <label>3</label>
    </ligand>
</feature>
<feature type="disulfide bond">
    <location>
        <begin position="203"/>
        <end position="223"/>
    </location>
</feature>
<feature type="sequence conflict" description="In Ref. 2; CAA48719." evidence="2" ref="2">
    <original>G</original>
    <variation>P</variation>
    <location>
        <position position="82"/>
    </location>
</feature>
<feature type="sequence conflict" description="In Ref. 2; CAA48719." evidence="2" ref="2">
    <original>A</original>
    <variation>P</variation>
    <location>
        <position position="160"/>
    </location>
</feature>
<feature type="sequence conflict" description="In Ref. 2; CAA48719." evidence="2" ref="2">
    <original>A</original>
    <variation>I</variation>
    <location>
        <position position="247"/>
    </location>
</feature>
<feature type="sequence conflict" description="In Ref. 2; CAA48719." evidence="2" ref="2">
    <original>E</original>
    <variation>K</variation>
    <location>
        <position position="282"/>
    </location>
</feature>
<feature type="helix" evidence="4">
    <location>
        <begin position="71"/>
        <end position="80"/>
    </location>
</feature>
<feature type="helix" evidence="4">
    <location>
        <begin position="86"/>
        <end position="112"/>
    </location>
</feature>
<feature type="turn" evidence="3">
    <location>
        <begin position="113"/>
        <end position="115"/>
    </location>
</feature>
<feature type="helix" evidence="4">
    <location>
        <begin position="127"/>
        <end position="142"/>
    </location>
</feature>
<feature type="turn" evidence="4">
    <location>
        <begin position="143"/>
        <end position="146"/>
    </location>
</feature>
<feature type="strand" evidence="4">
    <location>
        <begin position="147"/>
        <end position="152"/>
    </location>
</feature>
<feature type="strand" evidence="3">
    <location>
        <begin position="155"/>
        <end position="157"/>
    </location>
</feature>
<feature type="strand" evidence="4">
    <location>
        <begin position="161"/>
        <end position="166"/>
    </location>
</feature>
<feature type="strand" evidence="4">
    <location>
        <begin position="172"/>
        <end position="179"/>
    </location>
</feature>
<feature type="helix" evidence="4">
    <location>
        <begin position="184"/>
        <end position="186"/>
    </location>
</feature>
<feature type="strand" evidence="4">
    <location>
        <begin position="190"/>
        <end position="197"/>
    </location>
</feature>
<feature type="helix" evidence="4">
    <location>
        <begin position="218"/>
        <end position="227"/>
    </location>
</feature>
<feature type="turn" evidence="4">
    <location>
        <begin position="230"/>
        <end position="232"/>
    </location>
</feature>
<feature type="strand" evidence="4">
    <location>
        <begin position="233"/>
        <end position="254"/>
    </location>
</feature>
<feature type="strand" evidence="4">
    <location>
        <begin position="256"/>
        <end position="262"/>
    </location>
</feature>
<feature type="turn" evidence="4">
    <location>
        <begin position="263"/>
        <end position="266"/>
    </location>
</feature>
<feature type="strand" evidence="4">
    <location>
        <begin position="267"/>
        <end position="274"/>
    </location>
</feature>
<feature type="strand" evidence="4">
    <location>
        <begin position="282"/>
        <end position="285"/>
    </location>
</feature>
<feature type="helix" evidence="4">
    <location>
        <begin position="288"/>
        <end position="293"/>
    </location>
</feature>
<feature type="helix" evidence="4">
    <location>
        <begin position="296"/>
        <end position="306"/>
    </location>
</feature>
<feature type="strand" evidence="3">
    <location>
        <begin position="310"/>
        <end position="312"/>
    </location>
</feature>
<feature type="helix" evidence="4">
    <location>
        <begin position="323"/>
        <end position="333"/>
    </location>
</feature>
<feature type="strand" evidence="4">
    <location>
        <begin position="336"/>
        <end position="339"/>
    </location>
</feature>
<feature type="strand" evidence="4">
    <location>
        <begin position="343"/>
        <end position="345"/>
    </location>
</feature>
<feature type="strand" evidence="4">
    <location>
        <begin position="349"/>
        <end position="351"/>
    </location>
</feature>
<feature type="turn" evidence="4">
    <location>
        <begin position="352"/>
        <end position="355"/>
    </location>
</feature>
<feature type="helix" evidence="4">
    <location>
        <begin position="356"/>
        <end position="365"/>
    </location>
</feature>
<feature type="strand" evidence="4">
    <location>
        <begin position="369"/>
        <end position="376"/>
    </location>
</feature>
<feature type="helix" evidence="4">
    <location>
        <begin position="377"/>
        <end position="379"/>
    </location>
</feature>
<feature type="strand" evidence="4">
    <location>
        <begin position="391"/>
        <end position="394"/>
    </location>
</feature>
<feature type="helix" evidence="4">
    <location>
        <begin position="396"/>
        <end position="406"/>
    </location>
</feature>
<name>F16P1_PEA</name>